<proteinExistence type="inferred from homology"/>
<protein>
    <recommendedName>
        <fullName evidence="1">tRNA pseudouridine synthase D</fullName>
        <ecNumber evidence="1">5.4.99.27</ecNumber>
    </recommendedName>
    <alternativeName>
        <fullName evidence="1">tRNA pseudouridine(13) synthase</fullName>
    </alternativeName>
    <alternativeName>
        <fullName evidence="1">tRNA pseudouridylate synthase D</fullName>
    </alternativeName>
    <alternativeName>
        <fullName evidence="1">tRNA-uridine isomerase D</fullName>
    </alternativeName>
</protein>
<organism>
    <name type="scientific">Psychrobacter arcticus (strain DSM 17307 / VKM B-2377 / 273-4)</name>
    <dbReference type="NCBI Taxonomy" id="259536"/>
    <lineage>
        <taxon>Bacteria</taxon>
        <taxon>Pseudomonadati</taxon>
        <taxon>Pseudomonadota</taxon>
        <taxon>Gammaproteobacteria</taxon>
        <taxon>Moraxellales</taxon>
        <taxon>Moraxellaceae</taxon>
        <taxon>Psychrobacter</taxon>
    </lineage>
</organism>
<gene>
    <name evidence="1" type="primary">truD</name>
    <name type="ordered locus">Psyc_1696</name>
</gene>
<dbReference type="EC" id="5.4.99.27" evidence="1"/>
<dbReference type="EMBL" id="CP000082">
    <property type="protein sequence ID" value="AAZ19544.1"/>
    <property type="molecule type" value="Genomic_DNA"/>
</dbReference>
<dbReference type="RefSeq" id="WP_011280958.1">
    <property type="nucleotide sequence ID" value="NC_007204.1"/>
</dbReference>
<dbReference type="SMR" id="Q4FR14"/>
<dbReference type="STRING" id="259536.Psyc_1696"/>
<dbReference type="KEGG" id="par:Psyc_1696"/>
<dbReference type="eggNOG" id="COG0585">
    <property type="taxonomic scope" value="Bacteria"/>
</dbReference>
<dbReference type="HOGENOM" id="CLU_005281_4_0_6"/>
<dbReference type="OrthoDB" id="1550679at2"/>
<dbReference type="Proteomes" id="UP000000546">
    <property type="component" value="Chromosome"/>
</dbReference>
<dbReference type="GO" id="GO:0005829">
    <property type="term" value="C:cytosol"/>
    <property type="evidence" value="ECO:0007669"/>
    <property type="project" value="TreeGrafter"/>
</dbReference>
<dbReference type="GO" id="GO:0003723">
    <property type="term" value="F:RNA binding"/>
    <property type="evidence" value="ECO:0007669"/>
    <property type="project" value="InterPro"/>
</dbReference>
<dbReference type="GO" id="GO:0160150">
    <property type="term" value="F:tRNA pseudouridine(13) synthase activity"/>
    <property type="evidence" value="ECO:0007669"/>
    <property type="project" value="UniProtKB-EC"/>
</dbReference>
<dbReference type="GO" id="GO:0031119">
    <property type="term" value="P:tRNA pseudouridine synthesis"/>
    <property type="evidence" value="ECO:0007669"/>
    <property type="project" value="UniProtKB-UniRule"/>
</dbReference>
<dbReference type="CDD" id="cd02575">
    <property type="entry name" value="PseudoU_synth_EcTruD"/>
    <property type="match status" value="1"/>
</dbReference>
<dbReference type="Gene3D" id="3.30.2350.20">
    <property type="entry name" value="TruD, catalytic domain"/>
    <property type="match status" value="1"/>
</dbReference>
<dbReference type="Gene3D" id="3.30.2340.10">
    <property type="entry name" value="TruD, insertion domain"/>
    <property type="match status" value="1"/>
</dbReference>
<dbReference type="HAMAP" id="MF_01082">
    <property type="entry name" value="TruD"/>
    <property type="match status" value="1"/>
</dbReference>
<dbReference type="InterPro" id="IPR020103">
    <property type="entry name" value="PsdUridine_synth_cat_dom_sf"/>
</dbReference>
<dbReference type="InterPro" id="IPR001656">
    <property type="entry name" value="PsdUridine_synth_TruD"/>
</dbReference>
<dbReference type="InterPro" id="IPR020119">
    <property type="entry name" value="PsdUridine_synth_TruD_CS"/>
</dbReference>
<dbReference type="InterPro" id="IPR011760">
    <property type="entry name" value="PsdUridine_synth_TruD_insert"/>
</dbReference>
<dbReference type="InterPro" id="IPR042214">
    <property type="entry name" value="TruD_catalytic"/>
</dbReference>
<dbReference type="InterPro" id="IPR043165">
    <property type="entry name" value="TruD_insert_sf"/>
</dbReference>
<dbReference type="InterPro" id="IPR050170">
    <property type="entry name" value="TruD_pseudoU_synthase"/>
</dbReference>
<dbReference type="PANTHER" id="PTHR47811">
    <property type="entry name" value="TRNA PSEUDOURIDINE SYNTHASE D"/>
    <property type="match status" value="1"/>
</dbReference>
<dbReference type="PANTHER" id="PTHR47811:SF1">
    <property type="entry name" value="TRNA PSEUDOURIDINE SYNTHASE D"/>
    <property type="match status" value="1"/>
</dbReference>
<dbReference type="Pfam" id="PF01142">
    <property type="entry name" value="TruD"/>
    <property type="match status" value="2"/>
</dbReference>
<dbReference type="SUPFAM" id="SSF55120">
    <property type="entry name" value="Pseudouridine synthase"/>
    <property type="match status" value="1"/>
</dbReference>
<dbReference type="PROSITE" id="PS50984">
    <property type="entry name" value="TRUD"/>
    <property type="match status" value="1"/>
</dbReference>
<dbReference type="PROSITE" id="PS01268">
    <property type="entry name" value="UPF0024"/>
    <property type="match status" value="1"/>
</dbReference>
<sequence length="403" mass="44893">MTVQVQDHDITTAADTAKLPQPMQPPLKQATYKTHTTDFIVNELLPLEFTGEGEHLWLHIQKSGMNTAYLAKLLSEWAEIPLRDVGFSGLKDRHALTTQWFSLRIPKKQLPDSEFAPVDISANESVTILEQQWHNKKLNRGTHRANQFIITLRDIEFASFEASLSLQISASEQPMSAKQAVEQHLTTISQSGVPNYFGPQRFGRSGNNIREALSLFARPVPESRPQPNKGKRKRVPREQNSMELSAARSLIFNEILAARVRDGSWNTGLAGEVFNLDGSGSIFASDEIDHTLRARLETGDIHPTAVLWGTSNEKVSGKAAAMETDIVAQSPLLMQLAVGLEQRDIKAQRRALRLPIEALSWEWEDKEDGQILVLNFTLTTGSFATSVLASLVQELITSSYSRS</sequence>
<keyword id="KW-0413">Isomerase</keyword>
<keyword id="KW-1185">Reference proteome</keyword>
<keyword id="KW-0819">tRNA processing</keyword>
<name>TRUD_PSYA2</name>
<reference key="1">
    <citation type="journal article" date="2010" name="Appl. Environ. Microbiol.">
        <title>The genome sequence of Psychrobacter arcticus 273-4, a psychroactive Siberian permafrost bacterium, reveals mechanisms for adaptation to low-temperature growth.</title>
        <authorList>
            <person name="Ayala-del-Rio H.L."/>
            <person name="Chain P.S."/>
            <person name="Grzymski J.J."/>
            <person name="Ponder M.A."/>
            <person name="Ivanova N."/>
            <person name="Bergholz P.W."/>
            <person name="Di Bartolo G."/>
            <person name="Hauser L."/>
            <person name="Land M."/>
            <person name="Bakermans C."/>
            <person name="Rodrigues D."/>
            <person name="Klappenbach J."/>
            <person name="Zarka D."/>
            <person name="Larimer F."/>
            <person name="Richardson P."/>
            <person name="Murray A."/>
            <person name="Thomashow M."/>
            <person name="Tiedje J.M."/>
        </authorList>
    </citation>
    <scope>NUCLEOTIDE SEQUENCE [LARGE SCALE GENOMIC DNA]</scope>
    <source>
        <strain>DSM 17307 / VKM B-2377 / 273-4</strain>
    </source>
</reference>
<feature type="chain" id="PRO_0000230149" description="tRNA pseudouridine synthase D">
    <location>
        <begin position="1"/>
        <end position="403"/>
    </location>
</feature>
<feature type="domain" description="TRUD" evidence="1">
    <location>
        <begin position="192"/>
        <end position="354"/>
    </location>
</feature>
<feature type="region of interest" description="Disordered" evidence="2">
    <location>
        <begin position="1"/>
        <end position="24"/>
    </location>
</feature>
<feature type="region of interest" description="Disordered" evidence="2">
    <location>
        <begin position="217"/>
        <end position="240"/>
    </location>
</feature>
<feature type="compositionally biased region" description="Basic and acidic residues" evidence="2">
    <location>
        <begin position="1"/>
        <end position="10"/>
    </location>
</feature>
<feature type="active site" description="Nucleophile" evidence="1">
    <location>
        <position position="92"/>
    </location>
</feature>
<comment type="function">
    <text evidence="1">Responsible for synthesis of pseudouridine from uracil-13 in transfer RNAs.</text>
</comment>
<comment type="catalytic activity">
    <reaction evidence="1">
        <text>uridine(13) in tRNA = pseudouridine(13) in tRNA</text>
        <dbReference type="Rhea" id="RHEA:42540"/>
        <dbReference type="Rhea" id="RHEA-COMP:10105"/>
        <dbReference type="Rhea" id="RHEA-COMP:10106"/>
        <dbReference type="ChEBI" id="CHEBI:65314"/>
        <dbReference type="ChEBI" id="CHEBI:65315"/>
        <dbReference type="EC" id="5.4.99.27"/>
    </reaction>
</comment>
<comment type="similarity">
    <text evidence="1">Belongs to the pseudouridine synthase TruD family.</text>
</comment>
<evidence type="ECO:0000255" key="1">
    <source>
        <dbReference type="HAMAP-Rule" id="MF_01082"/>
    </source>
</evidence>
<evidence type="ECO:0000256" key="2">
    <source>
        <dbReference type="SAM" id="MobiDB-lite"/>
    </source>
</evidence>
<accession>Q4FR14</accession>